<feature type="chain" id="PRO_0000100479" description="Phosphoribosylformylglycinamidine synthase subunit PurL">
    <location>
        <begin position="1"/>
        <end position="779"/>
    </location>
</feature>
<feature type="active site" evidence="1">
    <location>
        <position position="52"/>
    </location>
</feature>
<feature type="active site" description="Proton acceptor" evidence="1">
    <location>
        <position position="98"/>
    </location>
</feature>
<feature type="binding site" evidence="1">
    <location>
        <position position="55"/>
    </location>
    <ligand>
        <name>ATP</name>
        <dbReference type="ChEBI" id="CHEBI:30616"/>
    </ligand>
</feature>
<feature type="binding site" evidence="1">
    <location>
        <position position="94"/>
    </location>
    <ligand>
        <name>ATP</name>
        <dbReference type="ChEBI" id="CHEBI:30616"/>
    </ligand>
</feature>
<feature type="binding site" evidence="1">
    <location>
        <position position="96"/>
    </location>
    <ligand>
        <name>Mg(2+)</name>
        <dbReference type="ChEBI" id="CHEBI:18420"/>
        <label>1</label>
    </ligand>
</feature>
<feature type="binding site" evidence="1">
    <location>
        <begin position="97"/>
        <end position="100"/>
    </location>
    <ligand>
        <name>substrate</name>
    </ligand>
</feature>
<feature type="binding site" evidence="1">
    <location>
        <position position="119"/>
    </location>
    <ligand>
        <name>substrate</name>
    </ligand>
</feature>
<feature type="binding site" evidence="1">
    <location>
        <position position="120"/>
    </location>
    <ligand>
        <name>Mg(2+)</name>
        <dbReference type="ChEBI" id="CHEBI:18420"/>
        <label>2</label>
    </ligand>
</feature>
<feature type="binding site" evidence="1">
    <location>
        <position position="243"/>
    </location>
    <ligand>
        <name>substrate</name>
    </ligand>
</feature>
<feature type="binding site" evidence="1">
    <location>
        <position position="271"/>
    </location>
    <ligand>
        <name>Mg(2+)</name>
        <dbReference type="ChEBI" id="CHEBI:18420"/>
        <label>2</label>
    </ligand>
</feature>
<feature type="binding site" evidence="1">
    <location>
        <begin position="315"/>
        <end position="317"/>
    </location>
    <ligand>
        <name>substrate</name>
    </ligand>
</feature>
<feature type="binding site" evidence="1">
    <location>
        <position position="523"/>
    </location>
    <ligand>
        <name>ATP</name>
        <dbReference type="ChEBI" id="CHEBI:30616"/>
    </ligand>
</feature>
<feature type="binding site" evidence="1">
    <location>
        <position position="560"/>
    </location>
    <ligand>
        <name>ATP</name>
        <dbReference type="ChEBI" id="CHEBI:30616"/>
    </ligand>
</feature>
<feature type="binding site" evidence="1">
    <location>
        <position position="561"/>
    </location>
    <ligand>
        <name>Mg(2+)</name>
        <dbReference type="ChEBI" id="CHEBI:18420"/>
        <label>1</label>
    </ligand>
</feature>
<feature type="binding site" evidence="1">
    <location>
        <position position="563"/>
    </location>
    <ligand>
        <name>substrate</name>
    </ligand>
</feature>
<proteinExistence type="inferred from homology"/>
<accession>Q7V3R5</accession>
<gene>
    <name evidence="1" type="primary">purL</name>
    <name type="ordered locus">PMM0003</name>
</gene>
<reference key="1">
    <citation type="journal article" date="2003" name="Nature">
        <title>Genome divergence in two Prochlorococcus ecotypes reflects oceanic niche differentiation.</title>
        <authorList>
            <person name="Rocap G."/>
            <person name="Larimer F.W."/>
            <person name="Lamerdin J.E."/>
            <person name="Malfatti S."/>
            <person name="Chain P."/>
            <person name="Ahlgren N.A."/>
            <person name="Arellano A."/>
            <person name="Coleman M."/>
            <person name="Hauser L."/>
            <person name="Hess W.R."/>
            <person name="Johnson Z.I."/>
            <person name="Land M.L."/>
            <person name="Lindell D."/>
            <person name="Post A.F."/>
            <person name="Regala W."/>
            <person name="Shah M."/>
            <person name="Shaw S.L."/>
            <person name="Steglich C."/>
            <person name="Sullivan M.B."/>
            <person name="Ting C.S."/>
            <person name="Tolonen A."/>
            <person name="Webb E.A."/>
            <person name="Zinser E.R."/>
            <person name="Chisholm S.W."/>
        </authorList>
    </citation>
    <scope>NUCLEOTIDE SEQUENCE [LARGE SCALE GENOMIC DNA]</scope>
    <source>
        <strain>CCMP1986 / NIES-2087 / MED4</strain>
    </source>
</reference>
<comment type="function">
    <text evidence="1">Part of the phosphoribosylformylglycinamidine synthase complex involved in the purines biosynthetic pathway. Catalyzes the ATP-dependent conversion of formylglycinamide ribonucleotide (FGAR) and glutamine to yield formylglycinamidine ribonucleotide (FGAM) and glutamate. The FGAM synthase complex is composed of three subunits. PurQ produces an ammonia molecule by converting glutamine to glutamate. PurL transfers the ammonia molecule to FGAR to form FGAM in an ATP-dependent manner. PurS interacts with PurQ and PurL and is thought to assist in the transfer of the ammonia molecule from PurQ to PurL.</text>
</comment>
<comment type="catalytic activity">
    <reaction evidence="1">
        <text>N(2)-formyl-N(1)-(5-phospho-beta-D-ribosyl)glycinamide + L-glutamine + ATP + H2O = 2-formamido-N(1)-(5-O-phospho-beta-D-ribosyl)acetamidine + L-glutamate + ADP + phosphate + H(+)</text>
        <dbReference type="Rhea" id="RHEA:17129"/>
        <dbReference type="ChEBI" id="CHEBI:15377"/>
        <dbReference type="ChEBI" id="CHEBI:15378"/>
        <dbReference type="ChEBI" id="CHEBI:29985"/>
        <dbReference type="ChEBI" id="CHEBI:30616"/>
        <dbReference type="ChEBI" id="CHEBI:43474"/>
        <dbReference type="ChEBI" id="CHEBI:58359"/>
        <dbReference type="ChEBI" id="CHEBI:147286"/>
        <dbReference type="ChEBI" id="CHEBI:147287"/>
        <dbReference type="ChEBI" id="CHEBI:456216"/>
        <dbReference type="EC" id="6.3.5.3"/>
    </reaction>
</comment>
<comment type="pathway">
    <text evidence="1">Purine metabolism; IMP biosynthesis via de novo pathway; 5-amino-1-(5-phospho-D-ribosyl)imidazole from N(2)-formyl-N(1)-(5-phospho-D-ribosyl)glycinamide: step 1/2.</text>
</comment>
<comment type="subunit">
    <text evidence="1">Monomer. Part of the FGAM synthase complex composed of 1 PurL, 1 PurQ and 2 PurS subunits.</text>
</comment>
<comment type="subcellular location">
    <subcellularLocation>
        <location evidence="1">Cytoplasm</location>
    </subcellularLocation>
</comment>
<comment type="similarity">
    <text evidence="1">Belongs to the FGAMS family.</text>
</comment>
<sequence>MIDSSSNNTYDVNESLKVENLTRDDYEEICKRLGRKPNRTELGMFGVMWSEHCCYRNSKPLLANFPTTGKNVLVGPGENAGVIDVGNDQKLVFKIESHNHPSAIEPFQGAATGVGGILRDIFTMGARPIAVLNSLRFGNLDKLSNISLLRGVVSGISHYGNCVGVPTVGGEIDFDDSYSGNPLVNVMALGLLETDEIVCSGAKEVGSPVLYVGNTTGKDGVGGASFASSELNTNSLDNRPAVQVGDPFIEKSLIEACLDAFKTGDVLSAQDMGAAGLTCSSAEMAANGSLGISINLDLVPARENDMSAYQYLLSESQERMLLVVKEEKLNTLINQFKKWGLFANVIGEVISRKEVIISQKNQIVAQIPTSALSDETPINIHNIIKEPPIHLLEKWEWTEEELPAISENKILSLKDQQKYSFSEIILKLLSNPSIASKSWVYRQYDSQVQSNTVFKPGDADAALIRLRRQDEKNKNNEFSGVAASVDCNSRWVLLDPYRGSIAAVAESARNVSCVGAQPIAITNNLNFSSPETEIGYWQLSSACDGISKACIALETPVTGGNVSLYNESKNQNNQVTPINPTPVIGMVGTIKNVDKAISSGWKNINDQIWIIGSNASESSIAASSYLEYFHDLVTGRPPKIHLQDEKYCQSFLRDSIQKNYIASSHDVSDGGLAVALSECCILSSKGAYIQLEEKNARQDNLLFSEGGSRILFSVNKKEEQNFLNFLEIKSKDFGRNVYVKKIGFVSEHNLDITLQDQTLCNLRVDELTEKFNNSISNCF</sequence>
<dbReference type="EC" id="6.3.5.3" evidence="1"/>
<dbReference type="EMBL" id="BX548174">
    <property type="protein sequence ID" value="CAE18462.1"/>
    <property type="molecule type" value="Genomic_DNA"/>
</dbReference>
<dbReference type="RefSeq" id="WP_011131641.1">
    <property type="nucleotide sequence ID" value="NC_005072.1"/>
</dbReference>
<dbReference type="SMR" id="Q7V3R5"/>
<dbReference type="STRING" id="59919.PMM0003"/>
<dbReference type="KEGG" id="pmm:PMM0003"/>
<dbReference type="eggNOG" id="COG0046">
    <property type="taxonomic scope" value="Bacteria"/>
</dbReference>
<dbReference type="HOGENOM" id="CLU_003100_0_1_3"/>
<dbReference type="OrthoDB" id="9804441at2"/>
<dbReference type="UniPathway" id="UPA00074">
    <property type="reaction ID" value="UER00128"/>
</dbReference>
<dbReference type="Proteomes" id="UP000001026">
    <property type="component" value="Chromosome"/>
</dbReference>
<dbReference type="GO" id="GO:0005737">
    <property type="term" value="C:cytoplasm"/>
    <property type="evidence" value="ECO:0007669"/>
    <property type="project" value="UniProtKB-SubCell"/>
</dbReference>
<dbReference type="GO" id="GO:0005524">
    <property type="term" value="F:ATP binding"/>
    <property type="evidence" value="ECO:0007669"/>
    <property type="project" value="UniProtKB-UniRule"/>
</dbReference>
<dbReference type="GO" id="GO:0000287">
    <property type="term" value="F:magnesium ion binding"/>
    <property type="evidence" value="ECO:0007669"/>
    <property type="project" value="UniProtKB-UniRule"/>
</dbReference>
<dbReference type="GO" id="GO:0004642">
    <property type="term" value="F:phosphoribosylformylglycinamidine synthase activity"/>
    <property type="evidence" value="ECO:0007669"/>
    <property type="project" value="UniProtKB-UniRule"/>
</dbReference>
<dbReference type="GO" id="GO:0006189">
    <property type="term" value="P:'de novo' IMP biosynthetic process"/>
    <property type="evidence" value="ECO:0007669"/>
    <property type="project" value="UniProtKB-UniRule"/>
</dbReference>
<dbReference type="CDD" id="cd02203">
    <property type="entry name" value="PurL_repeat1"/>
    <property type="match status" value="1"/>
</dbReference>
<dbReference type="CDD" id="cd02204">
    <property type="entry name" value="PurL_repeat2"/>
    <property type="match status" value="1"/>
</dbReference>
<dbReference type="FunFam" id="3.30.1330.10:FF:000004">
    <property type="entry name" value="Phosphoribosylformylglycinamidine synthase subunit PurL"/>
    <property type="match status" value="1"/>
</dbReference>
<dbReference type="Gene3D" id="3.90.650.10">
    <property type="entry name" value="PurM-like C-terminal domain"/>
    <property type="match status" value="2"/>
</dbReference>
<dbReference type="Gene3D" id="3.30.1330.10">
    <property type="entry name" value="PurM-like, N-terminal domain"/>
    <property type="match status" value="2"/>
</dbReference>
<dbReference type="HAMAP" id="MF_00420">
    <property type="entry name" value="PurL_2"/>
    <property type="match status" value="1"/>
</dbReference>
<dbReference type="InterPro" id="IPR010074">
    <property type="entry name" value="PRibForGlyAmidine_synth_PurL"/>
</dbReference>
<dbReference type="InterPro" id="IPR041609">
    <property type="entry name" value="PurL_linker"/>
</dbReference>
<dbReference type="InterPro" id="IPR010918">
    <property type="entry name" value="PurM-like_C_dom"/>
</dbReference>
<dbReference type="InterPro" id="IPR036676">
    <property type="entry name" value="PurM-like_C_sf"/>
</dbReference>
<dbReference type="InterPro" id="IPR016188">
    <property type="entry name" value="PurM-like_N"/>
</dbReference>
<dbReference type="InterPro" id="IPR036921">
    <property type="entry name" value="PurM-like_N_sf"/>
</dbReference>
<dbReference type="NCBIfam" id="TIGR01736">
    <property type="entry name" value="FGAM_synth_II"/>
    <property type="match status" value="1"/>
</dbReference>
<dbReference type="NCBIfam" id="NF002290">
    <property type="entry name" value="PRK01213.1"/>
    <property type="match status" value="1"/>
</dbReference>
<dbReference type="PANTHER" id="PTHR43555">
    <property type="entry name" value="PHOSPHORIBOSYLFORMYLGLYCINAMIDINE SYNTHASE SUBUNIT PURL"/>
    <property type="match status" value="1"/>
</dbReference>
<dbReference type="PANTHER" id="PTHR43555:SF1">
    <property type="entry name" value="PHOSPHORIBOSYLFORMYLGLYCINAMIDINE SYNTHASE SUBUNIT PURL"/>
    <property type="match status" value="1"/>
</dbReference>
<dbReference type="Pfam" id="PF00586">
    <property type="entry name" value="AIRS"/>
    <property type="match status" value="2"/>
</dbReference>
<dbReference type="Pfam" id="PF02769">
    <property type="entry name" value="AIRS_C"/>
    <property type="match status" value="2"/>
</dbReference>
<dbReference type="Pfam" id="PF18072">
    <property type="entry name" value="FGAR-AT_linker"/>
    <property type="match status" value="1"/>
</dbReference>
<dbReference type="PIRSF" id="PIRSF001587">
    <property type="entry name" value="FGAM_synthase_II"/>
    <property type="match status" value="1"/>
</dbReference>
<dbReference type="SUPFAM" id="SSF56042">
    <property type="entry name" value="PurM C-terminal domain-like"/>
    <property type="match status" value="2"/>
</dbReference>
<dbReference type="SUPFAM" id="SSF55326">
    <property type="entry name" value="PurM N-terminal domain-like"/>
    <property type="match status" value="2"/>
</dbReference>
<name>PURL_PROMP</name>
<evidence type="ECO:0000255" key="1">
    <source>
        <dbReference type="HAMAP-Rule" id="MF_00420"/>
    </source>
</evidence>
<keyword id="KW-0067">ATP-binding</keyword>
<keyword id="KW-0963">Cytoplasm</keyword>
<keyword id="KW-0436">Ligase</keyword>
<keyword id="KW-0460">Magnesium</keyword>
<keyword id="KW-0479">Metal-binding</keyword>
<keyword id="KW-0547">Nucleotide-binding</keyword>
<keyword id="KW-0658">Purine biosynthesis</keyword>
<organism>
    <name type="scientific">Prochlorococcus marinus subsp. pastoris (strain CCMP1986 / NIES-2087 / MED4)</name>
    <dbReference type="NCBI Taxonomy" id="59919"/>
    <lineage>
        <taxon>Bacteria</taxon>
        <taxon>Bacillati</taxon>
        <taxon>Cyanobacteriota</taxon>
        <taxon>Cyanophyceae</taxon>
        <taxon>Synechococcales</taxon>
        <taxon>Prochlorococcaceae</taxon>
        <taxon>Prochlorococcus</taxon>
    </lineage>
</organism>
<protein>
    <recommendedName>
        <fullName evidence="1">Phosphoribosylformylglycinamidine synthase subunit PurL</fullName>
        <shortName evidence="1">FGAM synthase</shortName>
        <ecNumber evidence="1">6.3.5.3</ecNumber>
    </recommendedName>
    <alternativeName>
        <fullName evidence="1">Formylglycinamide ribonucleotide amidotransferase subunit II</fullName>
        <shortName evidence="1">FGAR amidotransferase II</shortName>
        <shortName evidence="1">FGAR-AT II</shortName>
    </alternativeName>
    <alternativeName>
        <fullName evidence="1">Glutamine amidotransferase PurL</fullName>
    </alternativeName>
    <alternativeName>
        <fullName evidence="1">Phosphoribosylformylglycinamidine synthase subunit II</fullName>
    </alternativeName>
</protein>